<keyword id="KW-0131">Cell cycle</keyword>
<keyword id="KW-0132">Cell division</keyword>
<keyword id="KW-0498">Mitosis</keyword>
<keyword id="KW-0677">Repeat</keyword>
<keyword id="KW-0749">Sporulation</keyword>
<keyword id="KW-0853">WD repeat</keyword>
<organism>
    <name type="scientific">Candida albicans</name>
    <name type="common">Yeast</name>
    <dbReference type="NCBI Taxonomy" id="5476"/>
    <lineage>
        <taxon>Eukaryota</taxon>
        <taxon>Fungi</taxon>
        <taxon>Dikarya</taxon>
        <taxon>Ascomycota</taxon>
        <taxon>Saccharomycotina</taxon>
        <taxon>Pichiomycetes</taxon>
        <taxon>Debaryomycetaceae</taxon>
        <taxon>Candida/Lodderomyces clade</taxon>
        <taxon>Candida</taxon>
    </lineage>
</organism>
<proteinExistence type="inferred from homology"/>
<dbReference type="EMBL" id="X96763">
    <property type="protein sequence ID" value="CAA65538.1"/>
    <property type="molecule type" value="Genomic_DNA"/>
</dbReference>
<dbReference type="SMR" id="P53699"/>
<dbReference type="VEuPathDB" id="FungiDB:CAWG_01518"/>
<dbReference type="VEuPathDB" id="FungiDB:CR_01680C_A"/>
<dbReference type="GO" id="GO:0005634">
    <property type="term" value="C:nucleus"/>
    <property type="evidence" value="ECO:0007669"/>
    <property type="project" value="TreeGrafter"/>
</dbReference>
<dbReference type="GO" id="GO:1990234">
    <property type="term" value="C:transferase complex"/>
    <property type="evidence" value="ECO:0007669"/>
    <property type="project" value="UniProtKB-ARBA"/>
</dbReference>
<dbReference type="GO" id="GO:0051301">
    <property type="term" value="P:cell division"/>
    <property type="evidence" value="ECO:0007669"/>
    <property type="project" value="UniProtKB-KW"/>
</dbReference>
<dbReference type="GO" id="GO:0030435">
    <property type="term" value="P:sporulation resulting in formation of a cellular spore"/>
    <property type="evidence" value="ECO:0007669"/>
    <property type="project" value="UniProtKB-KW"/>
</dbReference>
<dbReference type="CDD" id="cd00200">
    <property type="entry name" value="WD40"/>
    <property type="match status" value="1"/>
</dbReference>
<dbReference type="FunFam" id="2.130.10.10:FF:001079">
    <property type="entry name" value="Cell division control protein 4"/>
    <property type="match status" value="1"/>
</dbReference>
<dbReference type="FunFam" id="1.20.1280.50:FF:000116">
    <property type="entry name" value="SCF ubiquitin ligase complex subunit"/>
    <property type="match status" value="1"/>
</dbReference>
<dbReference type="Gene3D" id="1.20.1280.50">
    <property type="match status" value="1"/>
</dbReference>
<dbReference type="Gene3D" id="2.130.10.10">
    <property type="entry name" value="YVTN repeat-like/Quinoprotein amine dehydrogenase"/>
    <property type="match status" value="1"/>
</dbReference>
<dbReference type="InterPro" id="IPR031740">
    <property type="entry name" value="Cdc4_D"/>
</dbReference>
<dbReference type="InterPro" id="IPR036047">
    <property type="entry name" value="F-box-like_dom_sf"/>
</dbReference>
<dbReference type="InterPro" id="IPR001810">
    <property type="entry name" value="F-box_dom"/>
</dbReference>
<dbReference type="InterPro" id="IPR020472">
    <property type="entry name" value="G-protein_beta_WD-40_rep"/>
</dbReference>
<dbReference type="InterPro" id="IPR015943">
    <property type="entry name" value="WD40/YVTN_repeat-like_dom_sf"/>
</dbReference>
<dbReference type="InterPro" id="IPR019775">
    <property type="entry name" value="WD40_repeat_CS"/>
</dbReference>
<dbReference type="InterPro" id="IPR036322">
    <property type="entry name" value="WD40_repeat_dom_sf"/>
</dbReference>
<dbReference type="InterPro" id="IPR001680">
    <property type="entry name" value="WD40_rpt"/>
</dbReference>
<dbReference type="PANTHER" id="PTHR22847:SF637">
    <property type="entry name" value="WD REPEAT DOMAIN 5B"/>
    <property type="match status" value="1"/>
</dbReference>
<dbReference type="PANTHER" id="PTHR22847">
    <property type="entry name" value="WD40 REPEAT PROTEIN"/>
    <property type="match status" value="1"/>
</dbReference>
<dbReference type="Pfam" id="PF16856">
    <property type="entry name" value="CDC4_D"/>
    <property type="match status" value="1"/>
</dbReference>
<dbReference type="Pfam" id="PF12937">
    <property type="entry name" value="F-box-like"/>
    <property type="match status" value="1"/>
</dbReference>
<dbReference type="Pfam" id="PF00400">
    <property type="entry name" value="WD40"/>
    <property type="match status" value="6"/>
</dbReference>
<dbReference type="PRINTS" id="PR00320">
    <property type="entry name" value="GPROTEINBRPT"/>
</dbReference>
<dbReference type="SMART" id="SM00256">
    <property type="entry name" value="FBOX"/>
    <property type="match status" value="1"/>
</dbReference>
<dbReference type="SMART" id="SM00320">
    <property type="entry name" value="WD40"/>
    <property type="match status" value="7"/>
</dbReference>
<dbReference type="SUPFAM" id="SSF81383">
    <property type="entry name" value="F-box domain"/>
    <property type="match status" value="1"/>
</dbReference>
<dbReference type="SUPFAM" id="SSF50978">
    <property type="entry name" value="WD40 repeat-like"/>
    <property type="match status" value="1"/>
</dbReference>
<dbReference type="PROSITE" id="PS50181">
    <property type="entry name" value="FBOX"/>
    <property type="match status" value="1"/>
</dbReference>
<dbReference type="PROSITE" id="PS00678">
    <property type="entry name" value="WD_REPEATS_1"/>
    <property type="match status" value="4"/>
</dbReference>
<dbReference type="PROSITE" id="PS50082">
    <property type="entry name" value="WD_REPEATS_2"/>
    <property type="match status" value="4"/>
</dbReference>
<dbReference type="PROSITE" id="PS50294">
    <property type="entry name" value="WD_REPEATS_REGION"/>
    <property type="match status" value="1"/>
</dbReference>
<protein>
    <recommendedName>
        <fullName>Cell division control protein 4</fullName>
    </recommendedName>
</protein>
<sequence>MPSCDDTASSDTDCQSQVSSTAHLHSYRSNGLVEPPSKRRLTTTNETSLSSAGATTFQIESPGSISAITTNNSTTSAGDSNNSNSFSDQHSRHPRTPNAMNSPTHTPISDIEEDPIQQLPLPSPSASPIQSDTENEHVTTPDSLQGKANLDSIENVMSNEPTTQSELVDLVTKLSGFLSEANQNHLVFKLLQKTTRPTLSTFNNLINNSLKRDILSNVPFEVTMKILSYLDYKTLLSVAQVCKKWFDIINNPDTWIKLLKRDKLITDDAVIKYELQYPDQLLREWSTLPEINSAQVLYKKRKIIVNRWMDPKFKPHRISVSGHGNKVVTCLQHDDEKVVTGVDDKCISIYSTQTGQLMKVLEGHEGGVWALKYTGNTLVTGSTDRTVRVWNMKTGQCTHIFRGHTSTIRCLDIIHPAVIGKNQDGEDIVFPEYPLLITGSRDHNIHVWKLPVVDDSQDYIETFEGEFDNPYLIAVLSGHTQSVRSISGYGNIIISGSYDSTVRVWDLLDDGHCTHVLQGHLDRVYSTAIDFHSKTCFSGSMDSNINVWNFETGELKKVLVGHASLVGLLDLVDDVLVSAAADATLRIWDAKTGELRSKLKGHGAAITCFEHDGLRVVSGSEKMLKLWNVEKGTFARDLLSDVTGGIWQVRFDYKRCVAAVQRIINEDEGETFIEILDFSQPLLQ</sequence>
<name>CDC4_CANAX</name>
<feature type="chain" id="PRO_0000050898" description="Cell division control protein 4">
    <location>
        <begin position="1"/>
        <end position="684"/>
    </location>
</feature>
<feature type="domain" description="F-box" evidence="2">
    <location>
        <begin position="212"/>
        <end position="258"/>
    </location>
</feature>
<feature type="repeat" description="WD 1">
    <location>
        <begin position="322"/>
        <end position="351"/>
    </location>
</feature>
<feature type="repeat" description="WD 2">
    <location>
        <begin position="363"/>
        <end position="391"/>
    </location>
</feature>
<feature type="repeat" description="WD 3">
    <location>
        <begin position="403"/>
        <end position="431"/>
    </location>
</feature>
<feature type="repeat" description="WD 4">
    <location>
        <begin position="442"/>
        <end position="468"/>
    </location>
</feature>
<feature type="repeat" description="WD 5">
    <location>
        <begin position="478"/>
        <end position="506"/>
    </location>
</feature>
<feature type="repeat" description="WD 6">
    <location>
        <begin position="519"/>
        <end position="549"/>
    </location>
</feature>
<feature type="repeat" description="WD 7">
    <location>
        <begin position="561"/>
        <end position="589"/>
    </location>
</feature>
<feature type="region of interest" description="Disordered" evidence="3">
    <location>
        <begin position="1"/>
        <end position="146"/>
    </location>
</feature>
<feature type="compositionally biased region" description="Low complexity" evidence="3">
    <location>
        <begin position="1"/>
        <end position="17"/>
    </location>
</feature>
<feature type="compositionally biased region" description="Polar residues" evidence="3">
    <location>
        <begin position="18"/>
        <end position="29"/>
    </location>
</feature>
<feature type="compositionally biased region" description="Polar residues" evidence="3">
    <location>
        <begin position="42"/>
        <end position="63"/>
    </location>
</feature>
<feature type="compositionally biased region" description="Low complexity" evidence="3">
    <location>
        <begin position="64"/>
        <end position="77"/>
    </location>
</feature>
<feature type="compositionally biased region" description="Polar residues" evidence="3">
    <location>
        <begin position="78"/>
        <end position="88"/>
    </location>
</feature>
<feature type="compositionally biased region" description="Polar residues" evidence="3">
    <location>
        <begin position="98"/>
        <end position="107"/>
    </location>
</feature>
<feature type="compositionally biased region" description="Low complexity" evidence="3">
    <location>
        <begin position="116"/>
        <end position="131"/>
    </location>
</feature>
<evidence type="ECO:0000250" key="1"/>
<evidence type="ECO:0000255" key="2">
    <source>
        <dbReference type="PROSITE-ProRule" id="PRU00080"/>
    </source>
</evidence>
<evidence type="ECO:0000256" key="3">
    <source>
        <dbReference type="SAM" id="MobiDB-lite"/>
    </source>
</evidence>
<comment type="function">
    <text evidence="1">This protein is essential for initiation of DNA replication and separation of the spindle pole bodies to form the poles of the mitotic spindle. It also plays a role in bud development, fusion of zygotic nuclei after conjugation and various aspects of sporulation. Required for HTA1-HTB1 locus transcription activation (By similarity).</text>
</comment>
<gene>
    <name type="primary">CDC4</name>
</gene>
<reference key="1">
    <citation type="submission" date="1996-04" db="EMBL/GenBank/DDBJ databases">
        <authorList>
            <person name="Shieh J.C."/>
            <person name="White A.M."/>
            <person name="Rosamond J."/>
        </authorList>
    </citation>
    <scope>NUCLEOTIDE SEQUENCE [GENOMIC DNA]</scope>
    <source>
        <strain>SGY126</strain>
    </source>
</reference>
<accession>P53699</accession>